<protein>
    <recommendedName>
        <fullName>Zinc finger protein unc-98</fullName>
    </recommendedName>
    <alternativeName>
        <fullName>Uncoordinated protein 98</fullName>
    </alternativeName>
</protein>
<gene>
    <name type="primary">unc-98</name>
    <name type="ORF">F08C6.7</name>
</gene>
<dbReference type="EMBL" id="AF515600">
    <property type="protein sequence ID" value="AAM76039.1"/>
    <property type="molecule type" value="mRNA"/>
</dbReference>
<dbReference type="EMBL" id="FO080866">
    <property type="protein sequence ID" value="CCD67350.1"/>
    <property type="molecule type" value="Genomic_DNA"/>
</dbReference>
<dbReference type="PIR" id="T15974">
    <property type="entry name" value="T15974"/>
</dbReference>
<dbReference type="RefSeq" id="NP_509284.2">
    <property type="nucleotide sequence ID" value="NM_076883.6"/>
</dbReference>
<dbReference type="BioGRID" id="45944">
    <property type="interactions" value="59"/>
</dbReference>
<dbReference type="DIP" id="DIP-25572N"/>
<dbReference type="FunCoup" id="Q19203">
    <property type="interactions" value="26"/>
</dbReference>
<dbReference type="IntAct" id="Q19203">
    <property type="interactions" value="50"/>
</dbReference>
<dbReference type="MINT" id="Q19203"/>
<dbReference type="STRING" id="6239.F08C6.7.1"/>
<dbReference type="PaxDb" id="6239-F08C6.7"/>
<dbReference type="PeptideAtlas" id="Q19203"/>
<dbReference type="EnsemblMetazoa" id="F08C6.7.1">
    <property type="protein sequence ID" value="F08C6.7.1"/>
    <property type="gene ID" value="WBGene00006827"/>
</dbReference>
<dbReference type="GeneID" id="181020"/>
<dbReference type="KEGG" id="cel:CELE_F08C6.7"/>
<dbReference type="UCSC" id="F08C6.7">
    <property type="organism name" value="c. elegans"/>
</dbReference>
<dbReference type="AGR" id="WB:WBGene00006827"/>
<dbReference type="CTD" id="181020"/>
<dbReference type="WormBase" id="F08C6.7">
    <property type="protein sequence ID" value="CE31900"/>
    <property type="gene ID" value="WBGene00006827"/>
    <property type="gene designation" value="unc-98"/>
</dbReference>
<dbReference type="eggNOG" id="KOG1721">
    <property type="taxonomic scope" value="Eukaryota"/>
</dbReference>
<dbReference type="GeneTree" id="ENSGT00970000196069"/>
<dbReference type="HOGENOM" id="CLU_078605_0_0_1"/>
<dbReference type="InParanoid" id="Q19203"/>
<dbReference type="OMA" id="RASRYMM"/>
<dbReference type="OrthoDB" id="6077919at2759"/>
<dbReference type="PhylomeDB" id="Q19203"/>
<dbReference type="SignaLink" id="Q19203"/>
<dbReference type="PRO" id="PR:Q19203"/>
<dbReference type="Proteomes" id="UP000001940">
    <property type="component" value="Chromosome X"/>
</dbReference>
<dbReference type="Bgee" id="WBGene00006827">
    <property type="expression patterns" value="Expressed in larva and 3 other cell types or tissues"/>
</dbReference>
<dbReference type="GO" id="GO:0031430">
    <property type="term" value="C:M band"/>
    <property type="evidence" value="ECO:0000314"/>
    <property type="project" value="UniProtKB"/>
</dbReference>
<dbReference type="GO" id="GO:0032982">
    <property type="term" value="C:myosin filament"/>
    <property type="evidence" value="ECO:0007669"/>
    <property type="project" value="UniProtKB-KW"/>
</dbReference>
<dbReference type="GO" id="GO:0005634">
    <property type="term" value="C:nucleus"/>
    <property type="evidence" value="ECO:0000314"/>
    <property type="project" value="UniProtKB"/>
</dbReference>
<dbReference type="GO" id="GO:0008092">
    <property type="term" value="F:cytoskeletal protein binding"/>
    <property type="evidence" value="ECO:0000353"/>
    <property type="project" value="WormBase"/>
</dbReference>
<dbReference type="GO" id="GO:0000981">
    <property type="term" value="F:DNA-binding transcription factor activity, RNA polymerase II-specific"/>
    <property type="evidence" value="ECO:0000318"/>
    <property type="project" value="GO_Central"/>
</dbReference>
<dbReference type="GO" id="GO:0000977">
    <property type="term" value="F:RNA polymerase II transcription regulatory region sequence-specific DNA binding"/>
    <property type="evidence" value="ECO:0000318"/>
    <property type="project" value="GO_Central"/>
</dbReference>
<dbReference type="GO" id="GO:0008270">
    <property type="term" value="F:zinc ion binding"/>
    <property type="evidence" value="ECO:0000304"/>
    <property type="project" value="UniProtKB"/>
</dbReference>
<dbReference type="GO" id="GO:0040011">
    <property type="term" value="P:locomotion"/>
    <property type="evidence" value="ECO:0000315"/>
    <property type="project" value="UniProtKB"/>
</dbReference>
<dbReference type="GO" id="GO:0007626">
    <property type="term" value="P:locomotory behavior"/>
    <property type="evidence" value="ECO:0000315"/>
    <property type="project" value="UniProtKB"/>
</dbReference>
<dbReference type="GO" id="GO:0007517">
    <property type="term" value="P:muscle organ development"/>
    <property type="evidence" value="ECO:0007669"/>
    <property type="project" value="UniProtKB-KW"/>
</dbReference>
<dbReference type="GO" id="GO:0030239">
    <property type="term" value="P:myofibril assembly"/>
    <property type="evidence" value="ECO:0000315"/>
    <property type="project" value="UniProtKB"/>
</dbReference>
<dbReference type="GO" id="GO:0040032">
    <property type="term" value="P:post-embryonic body morphogenesis"/>
    <property type="evidence" value="ECO:0000315"/>
    <property type="project" value="UniProtKB"/>
</dbReference>
<dbReference type="GO" id="GO:0006357">
    <property type="term" value="P:regulation of transcription by RNA polymerase II"/>
    <property type="evidence" value="ECO:0000318"/>
    <property type="project" value="GO_Central"/>
</dbReference>
<dbReference type="FunFam" id="3.30.160.60:FF:002530">
    <property type="entry name" value="Zinc finger protein"/>
    <property type="match status" value="1"/>
</dbReference>
<dbReference type="Gene3D" id="3.30.160.60">
    <property type="entry name" value="Classic Zinc Finger"/>
    <property type="match status" value="3"/>
</dbReference>
<dbReference type="InterPro" id="IPR050331">
    <property type="entry name" value="Zinc_finger"/>
</dbReference>
<dbReference type="InterPro" id="IPR036236">
    <property type="entry name" value="Znf_C2H2_sf"/>
</dbReference>
<dbReference type="InterPro" id="IPR013087">
    <property type="entry name" value="Znf_C2H2_type"/>
</dbReference>
<dbReference type="PANTHER" id="PTHR16515">
    <property type="entry name" value="PR DOMAIN ZINC FINGER PROTEIN"/>
    <property type="match status" value="1"/>
</dbReference>
<dbReference type="PANTHER" id="PTHR16515:SF57">
    <property type="entry name" value="ZINC FINGER PROTEIN 154-LIKE"/>
    <property type="match status" value="1"/>
</dbReference>
<dbReference type="Pfam" id="PF00096">
    <property type="entry name" value="zf-C2H2"/>
    <property type="match status" value="1"/>
</dbReference>
<dbReference type="Pfam" id="PF13894">
    <property type="entry name" value="zf-C2H2_4"/>
    <property type="match status" value="1"/>
</dbReference>
<dbReference type="SMART" id="SM00355">
    <property type="entry name" value="ZnF_C2H2"/>
    <property type="match status" value="3"/>
</dbReference>
<dbReference type="SUPFAM" id="SSF57667">
    <property type="entry name" value="beta-beta-alpha zinc fingers"/>
    <property type="match status" value="2"/>
</dbReference>
<dbReference type="PROSITE" id="PS00028">
    <property type="entry name" value="ZINC_FINGER_C2H2_1"/>
    <property type="match status" value="3"/>
</dbReference>
<dbReference type="PROSITE" id="PS50157">
    <property type="entry name" value="ZINC_FINGER_C2H2_2"/>
    <property type="match status" value="3"/>
</dbReference>
<sequence>MDDDIFKEARKERDDFEELMNACDLAKMSVKNNEMVHGLETFGINGESSENGNKEKPKEIMKVVAPTVEAYVGSSSAQTPTKSSGGALDGSDQQEVRQDGTSVQKDDNGFVFYKCRFCGLTFNFMNTLRAHERIHDVSQPYVCGKCGDSFEFACQLEYHAAQHSEIDGYKCECGRTFFSYTEMLYHKHTDDPLELIGAPETTTIKVSKKRVLPVSEQDLPQPAFVTEGYEPKHPLRVYNDVRSKPYICEYCSKSYSDSRGLAYHMYSHRGEKYFNPRASRYMMGREGVGYTDSRSYYLFPRTSGYVTPRF</sequence>
<name>UNC98_CAEEL</name>
<accession>Q19203</accession>
<accession>Q8MUP9</accession>
<feature type="chain" id="PRO_0000046896" description="Zinc finger protein unc-98">
    <location>
        <begin position="1"/>
        <end position="310"/>
    </location>
</feature>
<feature type="zinc finger region" description="C2H2-type 1" evidence="1">
    <location>
        <begin position="113"/>
        <end position="135"/>
    </location>
</feature>
<feature type="zinc finger region" description="C2H2-type 2" evidence="1">
    <location>
        <begin position="141"/>
        <end position="163"/>
    </location>
</feature>
<feature type="zinc finger region" description="C2H2-type 3; degenerate" evidence="1">
    <location>
        <begin position="169"/>
        <end position="188"/>
    </location>
</feature>
<feature type="zinc finger region" description="C2H2-type 4" evidence="1">
    <location>
        <begin position="246"/>
        <end position="268"/>
    </location>
</feature>
<feature type="region of interest" description="Disordered" evidence="2">
    <location>
        <begin position="73"/>
        <end position="102"/>
    </location>
</feature>
<feature type="region of interest" description="Interaction with myo-3">
    <location>
        <begin position="198"/>
        <end position="310"/>
    </location>
</feature>
<feature type="compositionally biased region" description="Polar residues" evidence="2">
    <location>
        <begin position="73"/>
        <end position="84"/>
    </location>
</feature>
<comment type="function">
    <text evidence="3 5 6 7">Probable transcription factor required for muscle structure (PubMed:12808046, PubMed:7348600). Its dual subcellular localization suggests that it may function both as a muscle adhesion complex protein and as a transcription factor, or work together with transcription factors, to influence gene expression (PubMed:12808046). Thought to act as a molecular bridge between unc-97 and myo-3 at the M-line of muscles, possibly in a signaling role (PubMed:17158957). Plays a role in the formation of muscle connections, also called muscle arm extensions, between the body wall and the motor axons in the dorsal and ventral cord (PubMed:27123983).</text>
</comment>
<comment type="subunit">
    <text evidence="3 4 5">Interacts with hum-6, mep-1, myo-3, unc-96 and unc-97/PINCH.</text>
</comment>
<comment type="subcellular location">
    <subcellularLocation>
        <location evidence="3">Nucleus</location>
    </subcellularLocation>
    <subcellularLocation>
        <location evidence="3">Cytoplasm</location>
    </subcellularLocation>
    <text>Localized in body wall muscle M-lines, dense bodies and muscle nuclei.</text>
</comment>
<comment type="tissue specificity">
    <text evidence="3 5">Expressed in embryos from 1.5- to 2-fold stage in myofibrils. In larvae and adults, it is expressed in body wall muscle, and in addition, anal depressor muscle and vulval muscles. More specifically it is found in the thick filaments of muscle fibers.</text>
</comment>
<comment type="domain">
    <text evidence="3">The N-terminal part (1-106) mediates the nuclear localization, while the fourth zinc finger is required for the localization to M-lines and dense bodies.</text>
</comment>
<comment type="disruption phenotype">
    <text evidence="6 7">Disorganised A and I bands in body-wall muscle structure (PubMed:7348600). Defective extension of body wall muscle connections or arms towards the ventral nerve cord (PubMed:27123983). Double knockout with madd-3 results in severe muscle arm extension defects (PubMed:27123983).</text>
</comment>
<evidence type="ECO:0000255" key="1">
    <source>
        <dbReference type="PROSITE-ProRule" id="PRU00042"/>
    </source>
</evidence>
<evidence type="ECO:0000256" key="2">
    <source>
        <dbReference type="SAM" id="MobiDB-lite"/>
    </source>
</evidence>
<evidence type="ECO:0000269" key="3">
    <source>
    </source>
</evidence>
<evidence type="ECO:0000269" key="4">
    <source>
    </source>
</evidence>
<evidence type="ECO:0000269" key="5">
    <source>
    </source>
</evidence>
<evidence type="ECO:0000269" key="6">
    <source>
    </source>
</evidence>
<evidence type="ECO:0000269" key="7">
    <source>
    </source>
</evidence>
<proteinExistence type="evidence at protein level"/>
<reference key="1">
    <citation type="journal article" date="2003" name="Mol. Biol. Cell">
        <title>Caenorhabditis elegans UNC-98, a C2H2 Zn finger protein, is a novel partner of UNC-97/PINCH in muscle adhesion complexes.</title>
        <authorList>
            <person name="Mercer K.B."/>
            <person name="Flaherty D.B."/>
            <person name="Miller R.K."/>
            <person name="Qadota H."/>
            <person name="Tinley T.L."/>
            <person name="Moerman D.G."/>
            <person name="Benian G.M."/>
        </authorList>
    </citation>
    <scope>NUCLEOTIDE SEQUENCE [MRNA]</scope>
    <scope>FUNCTION</scope>
    <scope>INTERACTION WITH HUM-6; MEP-1 AND UNC-97</scope>
    <scope>SUBCELLULAR LOCATION</scope>
    <scope>TISSUE SPECIFICITY</scope>
    <scope>DOMAIN</scope>
</reference>
<reference key="2">
    <citation type="journal article" date="1998" name="Science">
        <title>Genome sequence of the nematode C. elegans: a platform for investigating biology.</title>
        <authorList>
            <consortium name="The C. elegans sequencing consortium"/>
        </authorList>
    </citation>
    <scope>NUCLEOTIDE SEQUENCE [LARGE SCALE GENOMIC DNA]</scope>
    <source>
        <strain>Bristol N2</strain>
    </source>
</reference>
<reference key="3">
    <citation type="journal article" date="1980" name="Cell Motil.">
        <title>Identification of genetic elements associated with muscle structure in the nematode Caenorhabditis elegans.</title>
        <authorList>
            <person name="Zengel J.M."/>
            <person name="Epstein H.F."/>
        </authorList>
    </citation>
    <scope>FUNCTION</scope>
    <scope>DISRUPTION PHENOTYPE</scope>
</reference>
<reference key="4">
    <citation type="journal article" date="2006" name="J. Cell Biol.">
        <title>UNC-98 links an integrin-associated complex to thick filaments in Caenorhabditis elegans muscle.</title>
        <authorList>
            <person name="Miller R.K."/>
            <person name="Qadota H."/>
            <person name="Landsverk M.L."/>
            <person name="Mercer K.B."/>
            <person name="Epstein H.F."/>
            <person name="Benian G.M."/>
        </authorList>
    </citation>
    <scope>FUNCTION</scope>
    <scope>INTERACTION WITH MYO-3</scope>
    <scope>TISSUE SPECIFICITY</scope>
</reference>
<reference key="5">
    <citation type="journal article" date="2006" name="Mol. Biol. Cell">
        <title>Caenorhabditis elegans UNC-96 is a new component of M-lines that interacts with UNC-98 and paramyosin and is required in adult muscle for assembly and/or maintenance of thick filaments.</title>
        <authorList>
            <person name="Mercer K.B."/>
            <person name="Miller R.K."/>
            <person name="Tinley T.L."/>
            <person name="Sheth S."/>
            <person name="Qadota H."/>
            <person name="Benian G.M."/>
        </authorList>
    </citation>
    <scope>INTERACTION WITH UNC-96</scope>
</reference>
<reference key="6">
    <citation type="journal article" date="2016" name="PLoS Genet.">
        <title>The MADD-3 LAMMER kinase interacts with a p38 MAP kinase pathway to regulate the display of the EVA-1 guidance receptor in Caenorhabditis elegans.</title>
        <authorList>
            <person name="D'Souza S.A."/>
            <person name="Rajendran L."/>
            <person name="Bagg R."/>
            <person name="Barbier L."/>
            <person name="van Pel D.M."/>
            <person name="Moshiri H."/>
            <person name="Roy P.J."/>
        </authorList>
    </citation>
    <scope>FUNCTION</scope>
    <scope>DISRUPTION PHENOTYPE</scope>
</reference>
<keyword id="KW-0963">Cytoplasm</keyword>
<keyword id="KW-0217">Developmental protein</keyword>
<keyword id="KW-0221">Differentiation</keyword>
<keyword id="KW-0238">DNA-binding</keyword>
<keyword id="KW-0479">Metal-binding</keyword>
<keyword id="KW-0514">Muscle protein</keyword>
<keyword id="KW-0517">Myogenesis</keyword>
<keyword id="KW-0539">Nucleus</keyword>
<keyword id="KW-1185">Reference proteome</keyword>
<keyword id="KW-0677">Repeat</keyword>
<keyword id="KW-0787">Thick filament</keyword>
<keyword id="KW-0804">Transcription</keyword>
<keyword id="KW-0805">Transcription regulation</keyword>
<keyword id="KW-0862">Zinc</keyword>
<keyword id="KW-0863">Zinc-finger</keyword>
<organism>
    <name type="scientific">Caenorhabditis elegans</name>
    <dbReference type="NCBI Taxonomy" id="6239"/>
    <lineage>
        <taxon>Eukaryota</taxon>
        <taxon>Metazoa</taxon>
        <taxon>Ecdysozoa</taxon>
        <taxon>Nematoda</taxon>
        <taxon>Chromadorea</taxon>
        <taxon>Rhabditida</taxon>
        <taxon>Rhabditina</taxon>
        <taxon>Rhabditomorpha</taxon>
        <taxon>Rhabditoidea</taxon>
        <taxon>Rhabditidae</taxon>
        <taxon>Peloderinae</taxon>
        <taxon>Caenorhabditis</taxon>
    </lineage>
</organism>